<protein>
    <recommendedName>
        <fullName>Putative ribose uptake protein RbsU</fullName>
    </recommendedName>
</protein>
<comment type="function">
    <text>Could be involved in the uptake of ribose.</text>
</comment>
<comment type="subcellular location">
    <subcellularLocation>
        <location evidence="2">Cell membrane</location>
        <topology evidence="2">Multi-pass membrane protein</topology>
    </subcellularLocation>
</comment>
<comment type="similarity">
    <text evidence="2">Belongs to the GRP transporter (TC 2.A.7.5) family.</text>
</comment>
<name>RBSU_LATSS</name>
<accession>Q9X4M3</accession>
<accession>Q38Z80</accession>
<proteinExistence type="inferred from homology"/>
<gene>
    <name type="primary">rbsU</name>
    <name type="ordered locus">LCA_0200</name>
</gene>
<reference key="1">
    <citation type="journal article" date="1999" name="J. Mol. Microbiol. Biotechnol.">
        <title>Ribose utilization in Lactobacillus sakei: analysis of the regulation of the rbs operon and putative involvement of a new transporter.</title>
        <authorList>
            <person name="Stentz R."/>
            <person name="Zagorec M."/>
        </authorList>
    </citation>
    <scope>NUCLEOTIDE SEQUENCE [GENOMIC DNA]</scope>
    <scope>PUTATIVE FUNCTION</scope>
</reference>
<reference key="2">
    <citation type="journal article" date="2005" name="Nat. Biotechnol.">
        <title>The complete genome sequence of the meat-borne lactic acid bacterium Lactobacillus sakei 23K.</title>
        <authorList>
            <person name="Chaillou S."/>
            <person name="Champomier-Verges M.-C."/>
            <person name="Cornet M."/>
            <person name="Crutz-Le Coq A.-M."/>
            <person name="Dudez A.-M."/>
            <person name="Martin V."/>
            <person name="Beaufils S."/>
            <person name="Darbon-Rongere E."/>
            <person name="Bossy R."/>
            <person name="Loux V."/>
            <person name="Zagorec M."/>
        </authorList>
    </citation>
    <scope>NUCLEOTIDE SEQUENCE [LARGE SCALE GENOMIC DNA]</scope>
    <source>
        <strain>23K</strain>
    </source>
</reference>
<sequence>MNAVNILIGLMPMIGWGIFPVIVGKIGGKPASQILGTTFGTLILAIVVAIFRGTPIPETKTFIFCLISGACWALAQIITFHVFETMGVSRTMPITTGFQLVGASLWGVFVLGNWSSSQSKLIGFTAIALIIIGVYLTAWSEDKSSASKSGAVKGILLLLVGELGYLGYSAFPQAVSADGFQGFLPQAIGMTIVGIIFGLTQTKKDYKPFKEATSYKNIFSGFFFAFAALTYLISAQPSVNGLATGFVLSQTSVIFATIGGIYILKEKKSKKEMIAVMVGLLLVLVAGSVTAFIK</sequence>
<evidence type="ECO:0000255" key="1"/>
<evidence type="ECO:0000305" key="2"/>
<dbReference type="EMBL" id="AF115391">
    <property type="protein sequence ID" value="AAD34336.1"/>
    <property type="molecule type" value="Genomic_DNA"/>
</dbReference>
<dbReference type="EMBL" id="CR936503">
    <property type="protein sequence ID" value="CAI54497.1"/>
    <property type="molecule type" value="Genomic_DNA"/>
</dbReference>
<dbReference type="RefSeq" id="WP_011373910.1">
    <property type="nucleotide sequence ID" value="NC_007576.1"/>
</dbReference>
<dbReference type="SMR" id="Q9X4M3"/>
<dbReference type="STRING" id="314315.LCA_0200"/>
<dbReference type="TCDB" id="2.A.7.5.2">
    <property type="family name" value="the drug/metabolite transporter (dmt) superfamily"/>
</dbReference>
<dbReference type="GeneID" id="57133010"/>
<dbReference type="KEGG" id="lsa:LCA_0200"/>
<dbReference type="eggNOG" id="COG4975">
    <property type="taxonomic scope" value="Bacteria"/>
</dbReference>
<dbReference type="HOGENOM" id="CLU_076024_0_1_9"/>
<dbReference type="OrthoDB" id="1452595at2"/>
<dbReference type="Proteomes" id="UP000002707">
    <property type="component" value="Chromosome"/>
</dbReference>
<dbReference type="GO" id="GO:0005886">
    <property type="term" value="C:plasma membrane"/>
    <property type="evidence" value="ECO:0007669"/>
    <property type="project" value="UniProtKB-SubCell"/>
</dbReference>
<dbReference type="GO" id="GO:0015144">
    <property type="term" value="F:carbohydrate transmembrane transporter activity"/>
    <property type="evidence" value="ECO:0007669"/>
    <property type="project" value="InterPro"/>
</dbReference>
<dbReference type="CDD" id="cd23111">
    <property type="entry name" value="ribose_uptake_RbsU"/>
    <property type="match status" value="1"/>
</dbReference>
<dbReference type="InterPro" id="IPR010651">
    <property type="entry name" value="Sugar_transport"/>
</dbReference>
<dbReference type="NCBIfam" id="TIGR00776">
    <property type="entry name" value="RhaT"/>
    <property type="match status" value="1"/>
</dbReference>
<dbReference type="NCBIfam" id="NF047342">
    <property type="entry name" value="symport_RbsU"/>
    <property type="match status" value="1"/>
</dbReference>
<dbReference type="PANTHER" id="PTHR16119">
    <property type="entry name" value="TRANSMEMBRANE PROTEIN 144"/>
    <property type="match status" value="1"/>
</dbReference>
<dbReference type="PANTHER" id="PTHR16119:SF17">
    <property type="entry name" value="TRANSMEMBRANE PROTEIN 144"/>
    <property type="match status" value="1"/>
</dbReference>
<dbReference type="Pfam" id="PF06800">
    <property type="entry name" value="Sugar_transport"/>
    <property type="match status" value="1"/>
</dbReference>
<dbReference type="SUPFAM" id="SSF103481">
    <property type="entry name" value="Multidrug resistance efflux transporter EmrE"/>
    <property type="match status" value="1"/>
</dbReference>
<keyword id="KW-1003">Cell membrane</keyword>
<keyword id="KW-0472">Membrane</keyword>
<keyword id="KW-1185">Reference proteome</keyword>
<keyword id="KW-0762">Sugar transport</keyword>
<keyword id="KW-0812">Transmembrane</keyword>
<keyword id="KW-1133">Transmembrane helix</keyword>
<keyword id="KW-0813">Transport</keyword>
<organism>
    <name type="scientific">Latilactobacillus sakei subsp. sakei (strain 23K)</name>
    <name type="common">Lactobacillus sakei subsp. sakei</name>
    <dbReference type="NCBI Taxonomy" id="314315"/>
    <lineage>
        <taxon>Bacteria</taxon>
        <taxon>Bacillati</taxon>
        <taxon>Bacillota</taxon>
        <taxon>Bacilli</taxon>
        <taxon>Lactobacillales</taxon>
        <taxon>Lactobacillaceae</taxon>
        <taxon>Latilactobacillus</taxon>
    </lineage>
</organism>
<feature type="chain" id="PRO_0000213636" description="Putative ribose uptake protein RbsU">
    <location>
        <begin position="1"/>
        <end position="294"/>
    </location>
</feature>
<feature type="transmembrane region" description="Helical" evidence="1">
    <location>
        <begin position="2"/>
        <end position="24"/>
    </location>
</feature>
<feature type="transmembrane region" description="Helical" evidence="1">
    <location>
        <begin position="34"/>
        <end position="56"/>
    </location>
</feature>
<feature type="transmembrane region" description="Helical" evidence="1">
    <location>
        <begin position="63"/>
        <end position="82"/>
    </location>
</feature>
<feature type="transmembrane region" description="Helical" evidence="1">
    <location>
        <begin position="92"/>
        <end position="114"/>
    </location>
</feature>
<feature type="transmembrane region" description="Helical" evidence="1">
    <location>
        <begin position="121"/>
        <end position="140"/>
    </location>
</feature>
<feature type="transmembrane region" description="Helical" evidence="1">
    <location>
        <begin position="150"/>
        <end position="172"/>
    </location>
</feature>
<feature type="transmembrane region" description="Helical" evidence="1">
    <location>
        <begin position="179"/>
        <end position="198"/>
    </location>
</feature>
<feature type="transmembrane region" description="Helical" evidence="1">
    <location>
        <begin position="218"/>
        <end position="235"/>
    </location>
</feature>
<feature type="transmembrane region" description="Helical" evidence="1">
    <location>
        <begin position="242"/>
        <end position="264"/>
    </location>
</feature>
<feature type="transmembrane region" description="Helical" evidence="1">
    <location>
        <begin position="274"/>
        <end position="293"/>
    </location>
</feature>